<sequence length="232" mass="25590">MEYVVVIPAAGQGKRMKAGKNKLFISLKGAPVIIHTLRVFESHAPCQKIILVINESEREDFRQLLAQFPIQTEIELVTGGAERQHSVYEGLKMIDKESVVLVHDGARPFVTHQHIDKLVETAEEAGAAVLAVPVKDTIKRAEGSRVAETFDRSSLWAVQTPQAFRLSLLKTAHMEAENKGFLGTDDASLVERLDGYQVSIVEGSYTNIKLTTPDDLIFAEAIMKAESGNHNV</sequence>
<dbReference type="EC" id="2.7.7.60" evidence="1"/>
<dbReference type="EMBL" id="CP000560">
    <property type="protein sequence ID" value="ABS72538.1"/>
    <property type="molecule type" value="Genomic_DNA"/>
</dbReference>
<dbReference type="RefSeq" id="WP_011996188.1">
    <property type="nucleotide sequence ID" value="NC_009725.2"/>
</dbReference>
<dbReference type="SMR" id="A7Z0L2"/>
<dbReference type="GeneID" id="93079254"/>
<dbReference type="KEGG" id="bay:RBAM_001150"/>
<dbReference type="HOGENOM" id="CLU_061281_2_2_9"/>
<dbReference type="UniPathway" id="UPA00056">
    <property type="reaction ID" value="UER00093"/>
</dbReference>
<dbReference type="Proteomes" id="UP000001120">
    <property type="component" value="Chromosome"/>
</dbReference>
<dbReference type="GO" id="GO:0050518">
    <property type="term" value="F:2-C-methyl-D-erythritol 4-phosphate cytidylyltransferase activity"/>
    <property type="evidence" value="ECO:0007669"/>
    <property type="project" value="UniProtKB-UniRule"/>
</dbReference>
<dbReference type="GO" id="GO:0019288">
    <property type="term" value="P:isopentenyl diphosphate biosynthetic process, methylerythritol 4-phosphate pathway"/>
    <property type="evidence" value="ECO:0007669"/>
    <property type="project" value="UniProtKB-UniRule"/>
</dbReference>
<dbReference type="CDD" id="cd02516">
    <property type="entry name" value="CDP-ME_synthetase"/>
    <property type="match status" value="1"/>
</dbReference>
<dbReference type="FunFam" id="3.90.550.10:FF:000003">
    <property type="entry name" value="2-C-methyl-D-erythritol 4-phosphate cytidylyltransferase"/>
    <property type="match status" value="1"/>
</dbReference>
<dbReference type="Gene3D" id="3.90.550.10">
    <property type="entry name" value="Spore Coat Polysaccharide Biosynthesis Protein SpsA, Chain A"/>
    <property type="match status" value="1"/>
</dbReference>
<dbReference type="HAMAP" id="MF_00108">
    <property type="entry name" value="IspD"/>
    <property type="match status" value="1"/>
</dbReference>
<dbReference type="InterPro" id="IPR001228">
    <property type="entry name" value="IspD"/>
</dbReference>
<dbReference type="InterPro" id="IPR034683">
    <property type="entry name" value="IspD/TarI"/>
</dbReference>
<dbReference type="InterPro" id="IPR050088">
    <property type="entry name" value="IspD/TarI_cytidylyltransf_bact"/>
</dbReference>
<dbReference type="InterPro" id="IPR018294">
    <property type="entry name" value="ISPD_synthase_CS"/>
</dbReference>
<dbReference type="InterPro" id="IPR029044">
    <property type="entry name" value="Nucleotide-diphossugar_trans"/>
</dbReference>
<dbReference type="NCBIfam" id="TIGR00453">
    <property type="entry name" value="ispD"/>
    <property type="match status" value="1"/>
</dbReference>
<dbReference type="PANTHER" id="PTHR32125">
    <property type="entry name" value="2-C-METHYL-D-ERYTHRITOL 4-PHOSPHATE CYTIDYLYLTRANSFERASE, CHLOROPLASTIC"/>
    <property type="match status" value="1"/>
</dbReference>
<dbReference type="PANTHER" id="PTHR32125:SF4">
    <property type="entry name" value="2-C-METHYL-D-ERYTHRITOL 4-PHOSPHATE CYTIDYLYLTRANSFERASE, CHLOROPLASTIC"/>
    <property type="match status" value="1"/>
</dbReference>
<dbReference type="Pfam" id="PF01128">
    <property type="entry name" value="IspD"/>
    <property type="match status" value="1"/>
</dbReference>
<dbReference type="SUPFAM" id="SSF53448">
    <property type="entry name" value="Nucleotide-diphospho-sugar transferases"/>
    <property type="match status" value="1"/>
</dbReference>
<dbReference type="PROSITE" id="PS01295">
    <property type="entry name" value="ISPD"/>
    <property type="match status" value="1"/>
</dbReference>
<name>ISPD_BACVZ</name>
<proteinExistence type="inferred from homology"/>
<reference key="1">
    <citation type="journal article" date="2007" name="Nat. Biotechnol.">
        <title>Comparative analysis of the complete genome sequence of the plant growth-promoting bacterium Bacillus amyloliquefaciens FZB42.</title>
        <authorList>
            <person name="Chen X.H."/>
            <person name="Koumoutsi A."/>
            <person name="Scholz R."/>
            <person name="Eisenreich A."/>
            <person name="Schneider K."/>
            <person name="Heinemeyer I."/>
            <person name="Morgenstern B."/>
            <person name="Voss B."/>
            <person name="Hess W.R."/>
            <person name="Reva O."/>
            <person name="Junge H."/>
            <person name="Voigt B."/>
            <person name="Jungblut P.R."/>
            <person name="Vater J."/>
            <person name="Suessmuth R."/>
            <person name="Liesegang H."/>
            <person name="Strittmatter A."/>
            <person name="Gottschalk G."/>
            <person name="Borriss R."/>
        </authorList>
    </citation>
    <scope>NUCLEOTIDE SEQUENCE [LARGE SCALE GENOMIC DNA]</scope>
    <source>
        <strain>DSM 23117 / BGSC 10A6 / LMG 26770 / FZB42</strain>
    </source>
</reference>
<protein>
    <recommendedName>
        <fullName evidence="1">2-C-methyl-D-erythritol 4-phosphate cytidylyltransferase</fullName>
        <ecNumber evidence="1">2.7.7.60</ecNumber>
    </recommendedName>
    <alternativeName>
        <fullName evidence="1">4-diphosphocytidyl-2C-methyl-D-erythritol synthase</fullName>
    </alternativeName>
    <alternativeName>
        <fullName evidence="1">MEP cytidylyltransferase</fullName>
        <shortName evidence="1">MCT</shortName>
    </alternativeName>
</protein>
<evidence type="ECO:0000255" key="1">
    <source>
        <dbReference type="HAMAP-Rule" id="MF_00108"/>
    </source>
</evidence>
<keyword id="KW-0414">Isoprene biosynthesis</keyword>
<keyword id="KW-0548">Nucleotidyltransferase</keyword>
<keyword id="KW-0808">Transferase</keyword>
<organism>
    <name type="scientific">Bacillus velezensis (strain DSM 23117 / BGSC 10A6 / LMG 26770 / FZB42)</name>
    <name type="common">Bacillus amyloliquefaciens subsp. plantarum</name>
    <dbReference type="NCBI Taxonomy" id="326423"/>
    <lineage>
        <taxon>Bacteria</taxon>
        <taxon>Bacillati</taxon>
        <taxon>Bacillota</taxon>
        <taxon>Bacilli</taxon>
        <taxon>Bacillales</taxon>
        <taxon>Bacillaceae</taxon>
        <taxon>Bacillus</taxon>
        <taxon>Bacillus amyloliquefaciens group</taxon>
    </lineage>
</organism>
<accession>A7Z0L2</accession>
<comment type="function">
    <text evidence="1">Catalyzes the formation of 4-diphosphocytidyl-2-C-methyl-D-erythritol from CTP and 2-C-methyl-D-erythritol 4-phosphate (MEP).</text>
</comment>
<comment type="catalytic activity">
    <reaction evidence="1">
        <text>2-C-methyl-D-erythritol 4-phosphate + CTP + H(+) = 4-CDP-2-C-methyl-D-erythritol + diphosphate</text>
        <dbReference type="Rhea" id="RHEA:13429"/>
        <dbReference type="ChEBI" id="CHEBI:15378"/>
        <dbReference type="ChEBI" id="CHEBI:33019"/>
        <dbReference type="ChEBI" id="CHEBI:37563"/>
        <dbReference type="ChEBI" id="CHEBI:57823"/>
        <dbReference type="ChEBI" id="CHEBI:58262"/>
        <dbReference type="EC" id="2.7.7.60"/>
    </reaction>
</comment>
<comment type="pathway">
    <text evidence="1">Isoprenoid biosynthesis; isopentenyl diphosphate biosynthesis via DXP pathway; isopentenyl diphosphate from 1-deoxy-D-xylulose 5-phosphate: step 2/6.</text>
</comment>
<comment type="similarity">
    <text evidence="1">Belongs to the IspD/TarI cytidylyltransferase family. IspD subfamily.</text>
</comment>
<feature type="chain" id="PRO_1000022897" description="2-C-methyl-D-erythritol 4-phosphate cytidylyltransferase">
    <location>
        <begin position="1"/>
        <end position="232"/>
    </location>
</feature>
<feature type="site" description="Transition state stabilizer" evidence="1">
    <location>
        <position position="15"/>
    </location>
</feature>
<feature type="site" description="Transition state stabilizer" evidence="1">
    <location>
        <position position="22"/>
    </location>
</feature>
<feature type="site" description="Positions MEP for the nucleophilic attack" evidence="1">
    <location>
        <position position="152"/>
    </location>
</feature>
<feature type="site" description="Positions MEP for the nucleophilic attack" evidence="1">
    <location>
        <position position="209"/>
    </location>
</feature>
<gene>
    <name evidence="1" type="primary">ispD</name>
    <name type="ordered locus">RBAM_001150</name>
</gene>